<accession>B1K0G8</accession>
<name>METXS_BURO0</name>
<organism>
    <name type="scientific">Burkholderia orbicola (strain MC0-3)</name>
    <dbReference type="NCBI Taxonomy" id="406425"/>
    <lineage>
        <taxon>Bacteria</taxon>
        <taxon>Pseudomonadati</taxon>
        <taxon>Pseudomonadota</taxon>
        <taxon>Betaproteobacteria</taxon>
        <taxon>Burkholderiales</taxon>
        <taxon>Burkholderiaceae</taxon>
        <taxon>Burkholderia</taxon>
        <taxon>Burkholderia cepacia complex</taxon>
        <taxon>Burkholderia orbicola</taxon>
    </lineage>
</organism>
<protein>
    <recommendedName>
        <fullName evidence="1">Homoserine O-succinyltransferase</fullName>
        <shortName evidence="1">HST</shortName>
        <ecNumber evidence="1">2.3.1.46</ecNumber>
    </recommendedName>
    <alternativeName>
        <fullName evidence="1">Homoserine transsuccinylase</fullName>
        <shortName evidence="1">HTS</shortName>
    </alternativeName>
</protein>
<reference key="1">
    <citation type="submission" date="2008-02" db="EMBL/GenBank/DDBJ databases">
        <title>Complete sequence of chromosome 1 of Burkholderia cenocepacia MC0-3.</title>
        <authorList>
            <person name="Copeland A."/>
            <person name="Lucas S."/>
            <person name="Lapidus A."/>
            <person name="Barry K."/>
            <person name="Bruce D."/>
            <person name="Goodwin L."/>
            <person name="Glavina del Rio T."/>
            <person name="Dalin E."/>
            <person name="Tice H."/>
            <person name="Pitluck S."/>
            <person name="Chain P."/>
            <person name="Malfatti S."/>
            <person name="Shin M."/>
            <person name="Vergez L."/>
            <person name="Schmutz J."/>
            <person name="Larimer F."/>
            <person name="Land M."/>
            <person name="Hauser L."/>
            <person name="Kyrpides N."/>
            <person name="Mikhailova N."/>
            <person name="Tiedje J."/>
            <person name="Richardson P."/>
        </authorList>
    </citation>
    <scope>NUCLEOTIDE SEQUENCE [LARGE SCALE GENOMIC DNA]</scope>
    <source>
        <strain>MC0-3</strain>
    </source>
</reference>
<dbReference type="EC" id="2.3.1.46" evidence="1"/>
<dbReference type="EMBL" id="CP000958">
    <property type="protein sequence ID" value="ACA92273.1"/>
    <property type="molecule type" value="Genomic_DNA"/>
</dbReference>
<dbReference type="SMR" id="B1K0G8"/>
<dbReference type="ESTHER" id="burca-metx">
    <property type="family name" value="Homoserine_transacetylase"/>
</dbReference>
<dbReference type="GeneID" id="83049896"/>
<dbReference type="KEGG" id="bcm:Bcenmc03_3115"/>
<dbReference type="HOGENOM" id="CLU_028760_1_2_4"/>
<dbReference type="UniPathway" id="UPA00051">
    <property type="reaction ID" value="UER00075"/>
</dbReference>
<dbReference type="Proteomes" id="UP000002169">
    <property type="component" value="Chromosome 1"/>
</dbReference>
<dbReference type="GO" id="GO:0005737">
    <property type="term" value="C:cytoplasm"/>
    <property type="evidence" value="ECO:0007669"/>
    <property type="project" value="UniProtKB-SubCell"/>
</dbReference>
<dbReference type="GO" id="GO:0004414">
    <property type="term" value="F:homoserine O-acetyltransferase activity"/>
    <property type="evidence" value="ECO:0007669"/>
    <property type="project" value="TreeGrafter"/>
</dbReference>
<dbReference type="GO" id="GO:0008899">
    <property type="term" value="F:homoserine O-succinyltransferase activity"/>
    <property type="evidence" value="ECO:0007669"/>
    <property type="project" value="UniProtKB-UniRule"/>
</dbReference>
<dbReference type="GO" id="GO:0009092">
    <property type="term" value="P:homoserine metabolic process"/>
    <property type="evidence" value="ECO:0007669"/>
    <property type="project" value="TreeGrafter"/>
</dbReference>
<dbReference type="GO" id="GO:0009086">
    <property type="term" value="P:methionine biosynthetic process"/>
    <property type="evidence" value="ECO:0007669"/>
    <property type="project" value="UniProtKB-UniRule"/>
</dbReference>
<dbReference type="FunFam" id="1.10.1740.110:FF:000001">
    <property type="entry name" value="Homoserine O-acetyltransferase"/>
    <property type="match status" value="1"/>
</dbReference>
<dbReference type="Gene3D" id="1.10.1740.110">
    <property type="match status" value="1"/>
</dbReference>
<dbReference type="Gene3D" id="3.40.50.1820">
    <property type="entry name" value="alpha/beta hydrolase"/>
    <property type="match status" value="1"/>
</dbReference>
<dbReference type="HAMAP" id="MF_00296">
    <property type="entry name" value="MetX_acyltransf"/>
    <property type="match status" value="1"/>
</dbReference>
<dbReference type="InterPro" id="IPR000073">
    <property type="entry name" value="AB_hydrolase_1"/>
</dbReference>
<dbReference type="InterPro" id="IPR029058">
    <property type="entry name" value="AB_hydrolase_fold"/>
</dbReference>
<dbReference type="InterPro" id="IPR008220">
    <property type="entry name" value="HAT_MetX-like"/>
</dbReference>
<dbReference type="NCBIfam" id="TIGR01392">
    <property type="entry name" value="homoserO_Ac_trn"/>
    <property type="match status" value="1"/>
</dbReference>
<dbReference type="NCBIfam" id="NF001209">
    <property type="entry name" value="PRK00175.1"/>
    <property type="match status" value="1"/>
</dbReference>
<dbReference type="PANTHER" id="PTHR32268">
    <property type="entry name" value="HOMOSERINE O-ACETYLTRANSFERASE"/>
    <property type="match status" value="1"/>
</dbReference>
<dbReference type="PANTHER" id="PTHR32268:SF11">
    <property type="entry name" value="HOMOSERINE O-ACETYLTRANSFERASE"/>
    <property type="match status" value="1"/>
</dbReference>
<dbReference type="Pfam" id="PF00561">
    <property type="entry name" value="Abhydrolase_1"/>
    <property type="match status" value="1"/>
</dbReference>
<dbReference type="PIRSF" id="PIRSF000443">
    <property type="entry name" value="Homoser_Ac_trans"/>
    <property type="match status" value="1"/>
</dbReference>
<dbReference type="SUPFAM" id="SSF53474">
    <property type="entry name" value="alpha/beta-Hydrolases"/>
    <property type="match status" value="1"/>
</dbReference>
<gene>
    <name evidence="1" type="primary">metXS</name>
    <name type="ordered locus">Bcenmc03_3115</name>
</gene>
<keyword id="KW-0012">Acyltransferase</keyword>
<keyword id="KW-0028">Amino-acid biosynthesis</keyword>
<keyword id="KW-0963">Cytoplasm</keyword>
<keyword id="KW-0486">Methionine biosynthesis</keyword>
<keyword id="KW-0808">Transferase</keyword>
<comment type="function">
    <text evidence="1">Transfers a succinyl group from succinyl-CoA to L-homoserine, forming succinyl-L-homoserine.</text>
</comment>
<comment type="catalytic activity">
    <reaction evidence="1">
        <text>L-homoserine + succinyl-CoA = O-succinyl-L-homoserine + CoA</text>
        <dbReference type="Rhea" id="RHEA:22008"/>
        <dbReference type="ChEBI" id="CHEBI:57287"/>
        <dbReference type="ChEBI" id="CHEBI:57292"/>
        <dbReference type="ChEBI" id="CHEBI:57476"/>
        <dbReference type="ChEBI" id="CHEBI:57661"/>
        <dbReference type="EC" id="2.3.1.46"/>
    </reaction>
</comment>
<comment type="pathway">
    <text evidence="1">Amino-acid biosynthesis; L-methionine biosynthesis via de novo pathway; O-succinyl-L-homoserine from L-homoserine: step 1/1.</text>
</comment>
<comment type="subunit">
    <text evidence="1">Homodimer.</text>
</comment>
<comment type="subcellular location">
    <subcellularLocation>
        <location evidence="1">Cytoplasm</location>
    </subcellularLocation>
</comment>
<comment type="similarity">
    <text evidence="1">Belongs to the AB hydrolase superfamily. MetX family.</text>
</comment>
<sequence>MESIGIVAPQTMHFAEPLRLQSGSVLGNYQLVVETYGELNAARSNAVLVCHALNASHHVAGVYADDPRSTGWWDNMVGPGKPLDTNRFFVIGVNNLGSCFGSTGPMSIDPSTGKPYGAKFPVVTVEDWVHAQARVADAFGIERFAAVMGGSLGGMQALAWSLMYPERVAHCIDIASTPKLSAQNIAFNEVARSAILSDPDFHGGDYYAHGVKPKRGLRVARMIGHITYLSDDDMAEKFGRALRRADGALDAYNFSFDVEFEVESYLRYQGDKFADYFDANTYLLITRALDYFDPAKAFDGNLTAALAHTQAKYLIASFSTDWRFAPARSREIVKALLDNKRTVSYAEIDAPHGHDAFLLDDARYHNLLRAYYERIANEVGA</sequence>
<evidence type="ECO:0000255" key="1">
    <source>
        <dbReference type="HAMAP-Rule" id="MF_00296"/>
    </source>
</evidence>
<feature type="chain" id="PRO_1000115213" description="Homoserine O-succinyltransferase">
    <location>
        <begin position="1"/>
        <end position="381"/>
    </location>
</feature>
<feature type="domain" description="AB hydrolase-1" evidence="1">
    <location>
        <begin position="45"/>
        <end position="360"/>
    </location>
</feature>
<feature type="active site" description="Nucleophile" evidence="1">
    <location>
        <position position="151"/>
    </location>
</feature>
<feature type="active site" evidence="1">
    <location>
        <position position="321"/>
    </location>
</feature>
<feature type="active site" evidence="1">
    <location>
        <position position="354"/>
    </location>
</feature>
<feature type="binding site" evidence="1">
    <location>
        <position position="221"/>
    </location>
    <ligand>
        <name>substrate</name>
    </ligand>
</feature>
<feature type="binding site" evidence="1">
    <location>
        <position position="355"/>
    </location>
    <ligand>
        <name>substrate</name>
    </ligand>
</feature>
<feature type="site" description="Important for acyl-CoA specificity" evidence="1">
    <location>
        <position position="323"/>
    </location>
</feature>
<proteinExistence type="inferred from homology"/>